<keyword id="KW-0325">Glycoprotein</keyword>
<keyword id="KW-0357">Heparan sulfate</keyword>
<keyword id="KW-0472">Membrane</keyword>
<keyword id="KW-0654">Proteoglycan</keyword>
<keyword id="KW-1185">Reference proteome</keyword>
<keyword id="KW-0732">Signal</keyword>
<keyword id="KW-0812">Transmembrane</keyword>
<keyword id="KW-1133">Transmembrane helix</keyword>
<reference key="1">
    <citation type="journal article" date="1994" name="J. Biol. Chem.">
        <title>Molecular cloning and genomic organization of chicken syndecan-4.</title>
        <authorList>
            <person name="Baciu P.C."/>
            <person name="Acaster C."/>
            <person name="Goetinck P.F."/>
        </authorList>
    </citation>
    <scope>NUCLEOTIDE SEQUENCE [MRNA]</scope>
</reference>
<reference key="2">
    <citation type="journal article" date="2000" name="J. Cell Sci.">
        <title>Syndesmos, a protein that interacts with the cytoplasmic domain of syndecan-4, mediates cell spreading and actin cytoskeletal organization.</title>
        <authorList>
            <person name="Baciu P.C."/>
            <person name="Saoncella S."/>
            <person name="Lee S.H."/>
            <person name="Denhez F."/>
            <person name="Leuthardt D."/>
            <person name="Goetinck P.F."/>
        </authorList>
    </citation>
    <scope>INTERACTION WITH SDOS</scope>
    <source>
        <tissue>Embryo</tissue>
    </source>
</reference>
<protein>
    <recommendedName>
        <fullName>Syndecan-4</fullName>
    </recommendedName>
</protein>
<name>SDC4_CHICK</name>
<organism>
    <name type="scientific">Gallus gallus</name>
    <name type="common">Chicken</name>
    <dbReference type="NCBI Taxonomy" id="9031"/>
    <lineage>
        <taxon>Eukaryota</taxon>
        <taxon>Metazoa</taxon>
        <taxon>Chordata</taxon>
        <taxon>Craniata</taxon>
        <taxon>Vertebrata</taxon>
        <taxon>Euteleostomi</taxon>
        <taxon>Archelosauria</taxon>
        <taxon>Archosauria</taxon>
        <taxon>Dinosauria</taxon>
        <taxon>Saurischia</taxon>
        <taxon>Theropoda</taxon>
        <taxon>Coelurosauria</taxon>
        <taxon>Aves</taxon>
        <taxon>Neognathae</taxon>
        <taxon>Galloanserae</taxon>
        <taxon>Galliformes</taxon>
        <taxon>Phasianidae</taxon>
        <taxon>Phasianinae</taxon>
        <taxon>Gallus</taxon>
    </lineage>
</organism>
<proteinExistence type="evidence at protein level"/>
<dbReference type="EMBL" id="L23940">
    <property type="protein sequence ID" value="AAA16479.1"/>
    <property type="molecule type" value="Unassigned_DNA"/>
</dbReference>
<dbReference type="PIR" id="A53126">
    <property type="entry name" value="A53126"/>
</dbReference>
<dbReference type="RefSeq" id="NP_001007870.1">
    <property type="nucleotide sequence ID" value="NM_001007869.2"/>
</dbReference>
<dbReference type="BMRB" id="P49416"/>
<dbReference type="SMR" id="P49416"/>
<dbReference type="FunCoup" id="P49416">
    <property type="interactions" value="197"/>
</dbReference>
<dbReference type="STRING" id="9031.ENSGALP00000070840"/>
<dbReference type="GlyCosmos" id="P49416">
    <property type="glycosylation" value="5 sites, No reported glycans"/>
</dbReference>
<dbReference type="GlyGen" id="P49416">
    <property type="glycosylation" value="5 sites"/>
</dbReference>
<dbReference type="PaxDb" id="9031-ENSGALP00000006255"/>
<dbReference type="GeneID" id="419184"/>
<dbReference type="KEGG" id="gga:419184"/>
<dbReference type="CTD" id="6385"/>
<dbReference type="VEuPathDB" id="HostDB:geneid_419184"/>
<dbReference type="eggNOG" id="ENOG502S1SZ">
    <property type="taxonomic scope" value="Eukaryota"/>
</dbReference>
<dbReference type="HOGENOM" id="CLU_046599_3_0_1"/>
<dbReference type="InParanoid" id="P49416"/>
<dbReference type="OMA" id="SMDNYIP"/>
<dbReference type="OrthoDB" id="10044468at2759"/>
<dbReference type="PhylomeDB" id="P49416"/>
<dbReference type="TreeFam" id="TF320463"/>
<dbReference type="Reactome" id="R-GGA-1971475">
    <property type="pathway name" value="A tetrasaccharide linker sequence is required for GAG synthesis"/>
</dbReference>
<dbReference type="Reactome" id="R-GGA-2022928">
    <property type="pathway name" value="HS-GAG biosynthesis"/>
</dbReference>
<dbReference type="Reactome" id="R-GGA-2024096">
    <property type="pathway name" value="HS-GAG degradation"/>
</dbReference>
<dbReference type="Reactome" id="R-GGA-3000170">
    <property type="pathway name" value="Syndecan interactions"/>
</dbReference>
<dbReference type="PRO" id="PR:P49416"/>
<dbReference type="Proteomes" id="UP000000539">
    <property type="component" value="Chromosome 20"/>
</dbReference>
<dbReference type="Bgee" id="ENSGALG00000003932">
    <property type="expression patterns" value="Expressed in colon and 13 other cell types or tissues"/>
</dbReference>
<dbReference type="GO" id="GO:0009986">
    <property type="term" value="C:cell surface"/>
    <property type="evidence" value="ECO:0000318"/>
    <property type="project" value="GO_Central"/>
</dbReference>
<dbReference type="GO" id="GO:0016020">
    <property type="term" value="C:membrane"/>
    <property type="evidence" value="ECO:0007669"/>
    <property type="project" value="UniProtKB-SubCell"/>
</dbReference>
<dbReference type="GO" id="GO:0090630">
    <property type="term" value="P:activation of GTPase activity"/>
    <property type="evidence" value="ECO:0000250"/>
    <property type="project" value="AgBase"/>
</dbReference>
<dbReference type="GO" id="GO:0016477">
    <property type="term" value="P:cell migration"/>
    <property type="evidence" value="ECO:0000318"/>
    <property type="project" value="GO_Central"/>
</dbReference>
<dbReference type="GO" id="GO:1902725">
    <property type="term" value="P:negative regulation of satellite cell differentiation"/>
    <property type="evidence" value="ECO:0000250"/>
    <property type="project" value="AgBase"/>
</dbReference>
<dbReference type="GO" id="GO:1902723">
    <property type="term" value="P:negative regulation of skeletal muscle satellite cell proliferation"/>
    <property type="evidence" value="ECO:0000250"/>
    <property type="project" value="AgBase"/>
</dbReference>
<dbReference type="GO" id="GO:1903078">
    <property type="term" value="P:positive regulation of protein localization to plasma membrane"/>
    <property type="evidence" value="ECO:0000250"/>
    <property type="project" value="AgBase"/>
</dbReference>
<dbReference type="GO" id="GO:0061098">
    <property type="term" value="P:positive regulation of protein tyrosine kinase activity"/>
    <property type="evidence" value="ECO:0000250"/>
    <property type="project" value="AgBase"/>
</dbReference>
<dbReference type="GO" id="GO:1903076">
    <property type="term" value="P:regulation of protein localization to plasma membrane"/>
    <property type="evidence" value="ECO:0000250"/>
    <property type="project" value="AgBase"/>
</dbReference>
<dbReference type="GO" id="GO:1902766">
    <property type="term" value="P:skeletal muscle satellite cell migration"/>
    <property type="evidence" value="ECO:0000250"/>
    <property type="project" value="AgBase"/>
</dbReference>
<dbReference type="GO" id="GO:0044319">
    <property type="term" value="P:wound healing, spreading of cells"/>
    <property type="evidence" value="ECO:0000250"/>
    <property type="project" value="AgBase"/>
</dbReference>
<dbReference type="InterPro" id="IPR003585">
    <property type="entry name" value="Neurexin-like"/>
</dbReference>
<dbReference type="InterPro" id="IPR001050">
    <property type="entry name" value="Syndecan"/>
</dbReference>
<dbReference type="InterPro" id="IPR027789">
    <property type="entry name" value="Syndecan/Neurexin_dom"/>
</dbReference>
<dbReference type="InterPro" id="IPR030479">
    <property type="entry name" value="Syndecan_CS"/>
</dbReference>
<dbReference type="PANTHER" id="PTHR10915">
    <property type="entry name" value="SYNDECAN"/>
    <property type="match status" value="1"/>
</dbReference>
<dbReference type="PANTHER" id="PTHR10915:SF3">
    <property type="entry name" value="SYNDECAN-4"/>
    <property type="match status" value="1"/>
</dbReference>
<dbReference type="Pfam" id="PF01034">
    <property type="entry name" value="Syndecan"/>
    <property type="match status" value="1"/>
</dbReference>
<dbReference type="SMART" id="SM00294">
    <property type="entry name" value="4.1m"/>
    <property type="match status" value="1"/>
</dbReference>
<dbReference type="PROSITE" id="PS00964">
    <property type="entry name" value="SYNDECAN"/>
    <property type="match status" value="1"/>
</dbReference>
<gene>
    <name type="primary">SDC4</name>
</gene>
<accession>P49416</accession>
<comment type="function">
    <text evidence="1">Cell surface proteoglycan which regulates exosome biogenesis in concert with SDCBP and PDCD6IP.</text>
</comment>
<comment type="subunit">
    <text evidence="4">Interacts with SDOS.</text>
</comment>
<comment type="subcellular location">
    <subcellularLocation>
        <location evidence="3">Membrane</location>
        <topology evidence="3">Single-pass type I membrane protein</topology>
    </subcellularLocation>
</comment>
<comment type="PTM">
    <text evidence="2">O-glycosylated; contains both chondroitin sulfate and heparan sulfate. Ser-38, Ser-65 and Ser-67 can all be modified by either chondroitin sulfate or heparan sulfate, and the protein exists in forms that contain only chondroitin sulfate, only heparan sulfate and both chondroitin sulfate and heparan sulfate.</text>
</comment>
<comment type="similarity">
    <text evidence="5">Belongs to the syndecan proteoglycan family.</text>
</comment>
<feature type="signal peptide" evidence="3">
    <location>
        <begin position="1"/>
        <end position="19"/>
    </location>
</feature>
<feature type="chain" id="PRO_0000033510" description="Syndecan-4">
    <location>
        <begin position="20"/>
        <end position="197"/>
    </location>
</feature>
<feature type="topological domain" description="Extracellular" evidence="3">
    <location>
        <begin position="20"/>
        <end position="147"/>
    </location>
</feature>
<feature type="transmembrane region" description="Helical" evidence="3">
    <location>
        <begin position="148"/>
        <end position="168"/>
    </location>
</feature>
<feature type="topological domain" description="Cytoplasmic" evidence="3">
    <location>
        <begin position="169"/>
        <end position="197"/>
    </location>
</feature>
<feature type="glycosylation site" description="O-linked (Xyl...) (glycosaminoglycan) serine" evidence="2">
    <location>
        <position position="38"/>
    </location>
</feature>
<feature type="glycosylation site" description="O-linked (Xyl...) (glycosaminoglycan) serine" evidence="2">
    <location>
        <position position="65"/>
    </location>
</feature>
<feature type="glycosylation site" description="O-linked (Xyl...) (glycosaminoglycan) serine" evidence="2">
    <location>
        <position position="67"/>
    </location>
</feature>
<feature type="glycosylation site" description="N-linked (GlcNAc...) asparagine" evidence="3">
    <location>
        <position position="124"/>
    </location>
</feature>
<feature type="glycosylation site" description="N-linked (GlcNAc...) asparagine" evidence="3">
    <location>
        <position position="136"/>
    </location>
</feature>
<sequence length="197" mass="21502">MPLPRAAFLLGLLLAAAAAESVRETETMDARWLDNVGSGDLPDDEDIGEFTPHLTSDEFDIDDTSGSGDYSDYDDAIYLTTVDTPAISDNYIPGDTERKMEGEKKNTMLDNEIIPDKASPVEANLSNKISMASTANSSIFERTEVLTALIAGGAVGLLFAVFLILLLVYRMKKKDEGSYDLGKKPIYKKAPTNEFYA</sequence>
<evidence type="ECO:0000250" key="1">
    <source>
        <dbReference type="UniProtKB" id="P31431"/>
    </source>
</evidence>
<evidence type="ECO:0000250" key="2">
    <source>
        <dbReference type="UniProtKB" id="P34901"/>
    </source>
</evidence>
<evidence type="ECO:0000255" key="3"/>
<evidence type="ECO:0000269" key="4">
    <source>
    </source>
</evidence>
<evidence type="ECO:0000305" key="5"/>